<gene>
    <name type="primary">cs</name>
</gene>
<proteinExistence type="evidence at transcript level"/>
<dbReference type="EC" id="2.3.3.1"/>
<dbReference type="EMBL" id="AY461851">
    <property type="protein sequence ID" value="AAR98861.1"/>
    <property type="molecule type" value="mRNA"/>
</dbReference>
<dbReference type="SMR" id="Q6S9V6"/>
<dbReference type="UniPathway" id="UPA00223">
    <property type="reaction ID" value="UER00717"/>
</dbReference>
<dbReference type="GO" id="GO:0005759">
    <property type="term" value="C:mitochondrial matrix"/>
    <property type="evidence" value="ECO:0000250"/>
    <property type="project" value="UniProtKB"/>
</dbReference>
<dbReference type="GO" id="GO:0004108">
    <property type="term" value="F:citrate (Si)-synthase activity"/>
    <property type="evidence" value="ECO:0000250"/>
    <property type="project" value="UniProtKB"/>
</dbReference>
<dbReference type="GO" id="GO:0042802">
    <property type="term" value="F:identical protein binding"/>
    <property type="evidence" value="ECO:0000250"/>
    <property type="project" value="UniProtKB"/>
</dbReference>
<dbReference type="GO" id="GO:0005975">
    <property type="term" value="P:carbohydrate metabolic process"/>
    <property type="evidence" value="ECO:0000250"/>
    <property type="project" value="UniProtKB"/>
</dbReference>
<dbReference type="GO" id="GO:0006101">
    <property type="term" value="P:citrate metabolic process"/>
    <property type="evidence" value="ECO:0007669"/>
    <property type="project" value="InterPro"/>
</dbReference>
<dbReference type="GO" id="GO:0006099">
    <property type="term" value="P:tricarboxylic acid cycle"/>
    <property type="evidence" value="ECO:0007669"/>
    <property type="project" value="UniProtKB-UniPathway"/>
</dbReference>
<dbReference type="CDD" id="cd06105">
    <property type="entry name" value="ScCit1-2_like"/>
    <property type="match status" value="1"/>
</dbReference>
<dbReference type="FunFam" id="1.10.230.10:FF:000001">
    <property type="entry name" value="Citrate synthase"/>
    <property type="match status" value="1"/>
</dbReference>
<dbReference type="FunFam" id="1.10.580.10:FF:000001">
    <property type="entry name" value="Citrate synthase"/>
    <property type="match status" value="1"/>
</dbReference>
<dbReference type="Gene3D" id="1.10.580.10">
    <property type="entry name" value="Citrate Synthase, domain 1"/>
    <property type="match status" value="1"/>
</dbReference>
<dbReference type="Gene3D" id="1.10.230.10">
    <property type="entry name" value="Cytochrome P450-Terp, domain 2"/>
    <property type="match status" value="1"/>
</dbReference>
<dbReference type="InterPro" id="IPR016142">
    <property type="entry name" value="Citrate_synth-like_lrg_a-sub"/>
</dbReference>
<dbReference type="InterPro" id="IPR016143">
    <property type="entry name" value="Citrate_synth-like_sm_a-sub"/>
</dbReference>
<dbReference type="InterPro" id="IPR002020">
    <property type="entry name" value="Citrate_synthase"/>
</dbReference>
<dbReference type="InterPro" id="IPR019810">
    <property type="entry name" value="Citrate_synthase_AS"/>
</dbReference>
<dbReference type="InterPro" id="IPR010109">
    <property type="entry name" value="Citrate_synthase_euk"/>
</dbReference>
<dbReference type="InterPro" id="IPR036969">
    <property type="entry name" value="Citrate_synthase_sf"/>
</dbReference>
<dbReference type="NCBIfam" id="TIGR01793">
    <property type="entry name" value="cit_synth_euk"/>
    <property type="match status" value="1"/>
</dbReference>
<dbReference type="NCBIfam" id="NF007128">
    <property type="entry name" value="PRK09569.1"/>
    <property type="match status" value="1"/>
</dbReference>
<dbReference type="PANTHER" id="PTHR11739">
    <property type="entry name" value="CITRATE SYNTHASE"/>
    <property type="match status" value="1"/>
</dbReference>
<dbReference type="PANTHER" id="PTHR11739:SF8">
    <property type="entry name" value="CITRATE SYNTHASE, MITOCHONDRIAL"/>
    <property type="match status" value="1"/>
</dbReference>
<dbReference type="Pfam" id="PF00285">
    <property type="entry name" value="Citrate_synt"/>
    <property type="match status" value="1"/>
</dbReference>
<dbReference type="PRINTS" id="PR00143">
    <property type="entry name" value="CITRTSNTHASE"/>
</dbReference>
<dbReference type="SUPFAM" id="SSF48256">
    <property type="entry name" value="Citrate synthase"/>
    <property type="match status" value="1"/>
</dbReference>
<dbReference type="PROSITE" id="PS00480">
    <property type="entry name" value="CITRATE_SYNTHASE"/>
    <property type="match status" value="1"/>
</dbReference>
<reference key="1">
    <citation type="journal article" date="2005" name="Am. J. Physiol.">
        <title>Mitochondrial enzyme content in the muscles of high-performance fish: evolution and variation among fiber types.</title>
        <authorList>
            <person name="Dalziel A.C."/>
            <person name="Moore S.E."/>
            <person name="Moyes C.D."/>
        </authorList>
    </citation>
    <scope>NUCLEOTIDE SEQUENCE [MRNA]</scope>
    <source>
        <tissue>Red muscle</tissue>
    </source>
</reference>
<accession>Q6S9V6</accession>
<feature type="transit peptide" description="Mitochondrion" evidence="1">
    <location>
        <begin position="1"/>
        <end position="30"/>
    </location>
</feature>
<feature type="chain" id="PRO_0000253908" description="Citrate synthase, mitochondrial">
    <location>
        <begin position="31"/>
        <end position="469"/>
    </location>
</feature>
<feature type="active site" evidence="4">
    <location>
        <position position="304"/>
    </location>
</feature>
<feature type="active site" evidence="4">
    <location>
        <position position="350"/>
    </location>
</feature>
<feature type="active site" evidence="4">
    <location>
        <position position="405"/>
    </location>
</feature>
<feature type="binding site" description="in chain A" evidence="2">
    <location>
        <position position="359"/>
    </location>
    <ligand>
        <name>oxaloacetate</name>
        <dbReference type="ChEBI" id="CHEBI:16452"/>
        <note>ligand shared between homodimeric partners</note>
    </ligand>
</feature>
<feature type="binding site" description="in chain A" evidence="2">
    <location>
        <position position="431"/>
    </location>
    <ligand>
        <name>oxaloacetate</name>
        <dbReference type="ChEBI" id="CHEBI:16452"/>
        <note>ligand shared between homodimeric partners</note>
    </ligand>
</feature>
<feature type="binding site" description="in chain B" evidence="2">
    <location>
        <position position="451"/>
    </location>
    <ligand>
        <name>oxaloacetate</name>
        <dbReference type="ChEBI" id="CHEBI:16452"/>
        <note>ligand shared between homodimeric partners</note>
    </ligand>
</feature>
<name>CISY_XIPGL</name>
<keyword id="KW-0496">Mitochondrion</keyword>
<keyword id="KW-0808">Transferase</keyword>
<keyword id="KW-0809">Transit peptide</keyword>
<keyword id="KW-0816">Tricarboxylic acid cycle</keyword>
<sequence>MSFLTVSRLAPKLLNSKNATYFLVAARNASASSTNLKDVLADLIPKEQTRIKNFKQQYGKTNIGQITVDMVYGGMRGMKGLVYETSVLDPEEGIRFRGYSIPECQELLPKAPGGEEPLPEGLFWLLVTGQVPTEEQVNWVSKEWAKRAALPSHVVTMLDNFPTNLHPMSQFSAAITALNSESSFARAYSEGVHKTKYWEFIYEDSMDLIAKLPCIAAKIYRNLYREGSSIGAIDSNLDWSHNFTNMLGYSEPQFTELMRLYLTIHSDHEGGNVSAHTSHLVGSALSDPYLSFSAAMNGLAGPLHGLANQEVLVWLTALQKELGGEVSDERMRDYIWNTLKSGRVVPGYGHAVLRKTDPRYTCQREFALKHLPNDPMFKLVAQLYKIVPNVLLEQGKAKNPWPNVDAHSGVLLQYYGMTEMNYYTVLFGVSRALGVLAQLVWSRALGFPLERPKSMSTDGLMTLVGAKSG</sequence>
<comment type="function">
    <text evidence="5">Key enzyme of the Krebs tricarboxylic acid cycle which catalyzes the synthesis of citrate from acetyl coenzyme A and oxaloacetate.</text>
</comment>
<comment type="catalytic activity">
    <reaction evidence="4">
        <text>oxaloacetate + acetyl-CoA + H2O = citrate + CoA + H(+)</text>
        <dbReference type="Rhea" id="RHEA:16845"/>
        <dbReference type="ChEBI" id="CHEBI:15377"/>
        <dbReference type="ChEBI" id="CHEBI:15378"/>
        <dbReference type="ChEBI" id="CHEBI:16452"/>
        <dbReference type="ChEBI" id="CHEBI:16947"/>
        <dbReference type="ChEBI" id="CHEBI:57287"/>
        <dbReference type="ChEBI" id="CHEBI:57288"/>
        <dbReference type="EC" id="2.3.3.1"/>
    </reaction>
</comment>
<comment type="pathway">
    <text>Carbohydrate metabolism; tricarboxylic acid cycle; isocitrate from oxaloacetate: step 1/2.</text>
</comment>
<comment type="subunit">
    <text evidence="2">Homodimer.</text>
</comment>
<comment type="subcellular location">
    <subcellularLocation>
        <location evidence="3">Mitochondrion matrix</location>
    </subcellularLocation>
</comment>
<comment type="miscellaneous">
    <text>Citrate synthase is found in nearly all cells capable of oxidative metabolism.</text>
</comment>
<comment type="similarity">
    <text evidence="5">Belongs to the citrate synthase family.</text>
</comment>
<organism>
    <name type="scientific">Xiphias gladius</name>
    <name type="common">Swordfish</name>
    <name type="synonym">Tetrapterus imperator</name>
    <dbReference type="NCBI Taxonomy" id="8245"/>
    <lineage>
        <taxon>Eukaryota</taxon>
        <taxon>Metazoa</taxon>
        <taxon>Chordata</taxon>
        <taxon>Craniata</taxon>
        <taxon>Vertebrata</taxon>
        <taxon>Euteleostomi</taxon>
        <taxon>Actinopterygii</taxon>
        <taxon>Neopterygii</taxon>
        <taxon>Teleostei</taxon>
        <taxon>Neoteleostei</taxon>
        <taxon>Acanthomorphata</taxon>
        <taxon>Carangaria</taxon>
        <taxon>Istiophoriformes</taxon>
        <taxon>Xiphiidae</taxon>
        <taxon>Xiphias</taxon>
    </lineage>
</organism>
<evidence type="ECO:0000250" key="1"/>
<evidence type="ECO:0000250" key="2">
    <source>
        <dbReference type="UniProtKB" id="O75390"/>
    </source>
</evidence>
<evidence type="ECO:0000250" key="3">
    <source>
        <dbReference type="UniProtKB" id="P00889"/>
    </source>
</evidence>
<evidence type="ECO:0000255" key="4">
    <source>
        <dbReference type="PROSITE-ProRule" id="PRU10117"/>
    </source>
</evidence>
<evidence type="ECO:0000305" key="5"/>
<protein>
    <recommendedName>
        <fullName>Citrate synthase, mitochondrial</fullName>
        <ecNumber>2.3.3.1</ecNumber>
    </recommendedName>
    <alternativeName>
        <fullName>Citrate (Si)-synthase</fullName>
    </alternativeName>
</protein>